<sequence length="313" mass="34106">MRNWSFSKAALTVSLLALSWSPFGPAEVQAYPIYAQENYAYPREATGRIVCANCHLAQKPVDIEVPQAVLPDTVFEATVKIPYDTEAKQVLGTGKKGPLNVGAVLILPEGFQIAPTDRIPEEMQTKVGKLYFQQYSPEHPNVIVVGPLPGKKYNEMVFPILAPNPATNKDVHFLKYPIYLGGNRGRGQVYPDGSKSNNNIFQAPVAGTITSITPGEKLTRVTLKTVAGTEVVESIPAGPDIIVSVGQTVKADQPLTNNPNVGGFGQAETEVVLQNPARVQGLIIFFAFVLIAQVFLVLKKKQFEKVQLSEMNF</sequence>
<reference key="1">
    <citation type="journal article" date="1999" name="Proc. Natl. Acad. Sci. U.S.A.">
        <title>The complete chloroplast DNA sequence of the green alga Nephroselmis olivacea: insights into the architecture of ancestral chloroplast genomes.</title>
        <authorList>
            <person name="Turmel M."/>
            <person name="Otis C."/>
            <person name="Lemieux C."/>
        </authorList>
    </citation>
    <scope>NUCLEOTIDE SEQUENCE [LARGE SCALE GENOMIC DNA]</scope>
    <source>
        <strain>NIES-484 / S-N-5-8</strain>
    </source>
</reference>
<keyword id="KW-0150">Chloroplast</keyword>
<keyword id="KW-0249">Electron transport</keyword>
<keyword id="KW-0349">Heme</keyword>
<keyword id="KW-0408">Iron</keyword>
<keyword id="KW-0472">Membrane</keyword>
<keyword id="KW-0479">Metal-binding</keyword>
<keyword id="KW-0602">Photosynthesis</keyword>
<keyword id="KW-0934">Plastid</keyword>
<keyword id="KW-0732">Signal</keyword>
<keyword id="KW-0793">Thylakoid</keyword>
<keyword id="KW-0812">Transmembrane</keyword>
<keyword id="KW-1133">Transmembrane helix</keyword>
<keyword id="KW-0813">Transport</keyword>
<protein>
    <recommendedName>
        <fullName evidence="2">Cytochrome f</fullName>
    </recommendedName>
</protein>
<proteinExistence type="inferred from homology"/>
<name>CYF_NEPOL</name>
<comment type="function">
    <text evidence="2">Component of the cytochrome b6-f complex, which mediates electron transfer between photosystem II (PSII) and photosystem I (PSI), cyclic electron flow around PSI, and state transitions.</text>
</comment>
<comment type="cofactor">
    <cofactor evidence="2">
        <name>heme</name>
        <dbReference type="ChEBI" id="CHEBI:30413"/>
    </cofactor>
    <text evidence="2">Binds 1 heme group covalently.</text>
</comment>
<comment type="subunit">
    <text evidence="1">The 4 large subunits of the cytochrome b6-f complex are cytochrome b6, subunit IV (17 kDa polypeptide, petD), cytochrome f and the Rieske protein, while the 4 small subunits are PetG, PetL, PetM and PetN. The complex functions as a dimer (By similarity).</text>
</comment>
<comment type="subcellular location">
    <subcellularLocation>
        <location evidence="2">Plastid</location>
        <location evidence="2">Chloroplast thylakoid membrane</location>
        <topology evidence="2">Single-pass membrane protein</topology>
    </subcellularLocation>
</comment>
<comment type="similarity">
    <text evidence="2">Belongs to the cytochrome f family.</text>
</comment>
<gene>
    <name evidence="2" type="primary">petA</name>
</gene>
<organism>
    <name type="scientific">Nephroselmis olivacea</name>
    <name type="common">Green alga</name>
    <dbReference type="NCBI Taxonomy" id="31312"/>
    <lineage>
        <taxon>Eukaryota</taxon>
        <taxon>Viridiplantae</taxon>
        <taxon>Chlorophyta</taxon>
        <taxon>Nephroselmidophyceae</taxon>
        <taxon>Nephroselmidales</taxon>
        <taxon>Nephroselmidaceae</taxon>
        <taxon>Nephroselmis</taxon>
    </lineage>
</organism>
<geneLocation type="chloroplast"/>
<evidence type="ECO:0000250" key="1"/>
<evidence type="ECO:0000255" key="2">
    <source>
        <dbReference type="HAMAP-Rule" id="MF_00610"/>
    </source>
</evidence>
<dbReference type="EMBL" id="AF137379">
    <property type="protein sequence ID" value="AAD54825.1"/>
    <property type="molecule type" value="Genomic_DNA"/>
</dbReference>
<dbReference type="RefSeq" id="NP_050854.1">
    <property type="nucleotide sequence ID" value="NC_000927.1"/>
</dbReference>
<dbReference type="SMR" id="Q9TKZ1"/>
<dbReference type="GeneID" id="801947"/>
<dbReference type="GO" id="GO:0009535">
    <property type="term" value="C:chloroplast thylakoid membrane"/>
    <property type="evidence" value="ECO:0007669"/>
    <property type="project" value="UniProtKB-SubCell"/>
</dbReference>
<dbReference type="GO" id="GO:0009055">
    <property type="term" value="F:electron transfer activity"/>
    <property type="evidence" value="ECO:0007669"/>
    <property type="project" value="UniProtKB-UniRule"/>
</dbReference>
<dbReference type="GO" id="GO:0020037">
    <property type="term" value="F:heme binding"/>
    <property type="evidence" value="ECO:0007669"/>
    <property type="project" value="InterPro"/>
</dbReference>
<dbReference type="GO" id="GO:0005506">
    <property type="term" value="F:iron ion binding"/>
    <property type="evidence" value="ECO:0007669"/>
    <property type="project" value="InterPro"/>
</dbReference>
<dbReference type="GO" id="GO:0015979">
    <property type="term" value="P:photosynthesis"/>
    <property type="evidence" value="ECO:0007669"/>
    <property type="project" value="UniProtKB-UniRule"/>
</dbReference>
<dbReference type="FunFam" id="1.20.5.700:FF:000001">
    <property type="entry name" value="Cytochrome f"/>
    <property type="match status" value="1"/>
</dbReference>
<dbReference type="FunFam" id="2.60.40.830:FF:000001">
    <property type="entry name" value="Cytochrome f"/>
    <property type="match status" value="1"/>
</dbReference>
<dbReference type="Gene3D" id="2.40.50.100">
    <property type="match status" value="1"/>
</dbReference>
<dbReference type="Gene3D" id="2.60.40.830">
    <property type="entry name" value="Cytochrome f large domain"/>
    <property type="match status" value="1"/>
</dbReference>
<dbReference type="Gene3D" id="1.20.5.700">
    <property type="entry name" value="Single helix bin"/>
    <property type="match status" value="1"/>
</dbReference>
<dbReference type="HAMAP" id="MF_00610">
    <property type="entry name" value="Cytb6_f_cytF"/>
    <property type="match status" value="1"/>
</dbReference>
<dbReference type="InterPro" id="IPR024058">
    <property type="entry name" value="Cyt-f_TM"/>
</dbReference>
<dbReference type="InterPro" id="IPR002325">
    <property type="entry name" value="Cyt_f"/>
</dbReference>
<dbReference type="InterPro" id="IPR024094">
    <property type="entry name" value="Cyt_f_lg_dom"/>
</dbReference>
<dbReference type="InterPro" id="IPR036826">
    <property type="entry name" value="Cyt_f_lg_dom_sf"/>
</dbReference>
<dbReference type="InterPro" id="IPR011054">
    <property type="entry name" value="Rudment_hybrid_motif"/>
</dbReference>
<dbReference type="PANTHER" id="PTHR33288">
    <property type="match status" value="1"/>
</dbReference>
<dbReference type="PANTHER" id="PTHR33288:SF10">
    <property type="entry name" value="CYTOCHROME F"/>
    <property type="match status" value="1"/>
</dbReference>
<dbReference type="Pfam" id="PF01333">
    <property type="entry name" value="Apocytochr_F_C"/>
    <property type="match status" value="1"/>
</dbReference>
<dbReference type="Pfam" id="PF16639">
    <property type="entry name" value="Apocytochr_F_N"/>
    <property type="match status" value="1"/>
</dbReference>
<dbReference type="PRINTS" id="PR00610">
    <property type="entry name" value="CYTOCHROMEF"/>
</dbReference>
<dbReference type="SUPFAM" id="SSF103431">
    <property type="entry name" value="Cytochrome f subunit of the cytochrome b6f complex, transmembrane anchor"/>
    <property type="match status" value="1"/>
</dbReference>
<dbReference type="SUPFAM" id="SSF49441">
    <property type="entry name" value="Cytochrome f, large domain"/>
    <property type="match status" value="1"/>
</dbReference>
<dbReference type="SUPFAM" id="SSF51246">
    <property type="entry name" value="Rudiment single hybrid motif"/>
    <property type="match status" value="1"/>
</dbReference>
<dbReference type="PROSITE" id="PS51010">
    <property type="entry name" value="CYTF"/>
    <property type="match status" value="1"/>
</dbReference>
<accession>Q9TKZ1</accession>
<feature type="signal peptide" evidence="2">
    <location>
        <begin position="1"/>
        <end position="30"/>
    </location>
</feature>
<feature type="chain" id="PRO_0000023821" description="Cytochrome f">
    <location>
        <begin position="31"/>
        <end position="313"/>
    </location>
</feature>
<feature type="transmembrane region" description="Helical" evidence="2">
    <location>
        <begin position="279"/>
        <end position="298"/>
    </location>
</feature>
<feature type="binding site" description="axial binding residue" evidence="2">
    <location>
        <position position="31"/>
    </location>
    <ligand>
        <name>heme</name>
        <dbReference type="ChEBI" id="CHEBI:30413"/>
    </ligand>
    <ligandPart>
        <name>Fe</name>
        <dbReference type="ChEBI" id="CHEBI:18248"/>
    </ligandPart>
</feature>
<feature type="binding site" description="covalent" evidence="2">
    <location>
        <position position="51"/>
    </location>
    <ligand>
        <name>heme</name>
        <dbReference type="ChEBI" id="CHEBI:30413"/>
    </ligand>
</feature>
<feature type="binding site" description="covalent" evidence="2">
    <location>
        <position position="54"/>
    </location>
    <ligand>
        <name>heme</name>
        <dbReference type="ChEBI" id="CHEBI:30413"/>
    </ligand>
</feature>
<feature type="binding site" description="axial binding residue" evidence="2">
    <location>
        <position position="55"/>
    </location>
    <ligand>
        <name>heme</name>
        <dbReference type="ChEBI" id="CHEBI:30413"/>
    </ligand>
    <ligandPart>
        <name>Fe</name>
        <dbReference type="ChEBI" id="CHEBI:18248"/>
    </ligandPart>
</feature>